<name>FTSH_MARN8</name>
<gene>
    <name evidence="1" type="primary">ftsH</name>
    <name type="ordered locus">Maqu_1017</name>
</gene>
<comment type="function">
    <text evidence="1">Acts as a processive, ATP-dependent zinc metallopeptidase for both cytoplasmic and membrane proteins. Plays a role in the quality control of integral membrane proteins.</text>
</comment>
<comment type="cofactor">
    <cofactor evidence="1">
        <name>Zn(2+)</name>
        <dbReference type="ChEBI" id="CHEBI:29105"/>
    </cofactor>
    <text evidence="1">Binds 1 zinc ion per subunit.</text>
</comment>
<comment type="subunit">
    <text evidence="1">Homohexamer.</text>
</comment>
<comment type="subcellular location">
    <subcellularLocation>
        <location evidence="1">Cell inner membrane</location>
        <topology evidence="1">Multi-pass membrane protein</topology>
        <orientation evidence="1">Cytoplasmic side</orientation>
    </subcellularLocation>
</comment>
<comment type="similarity">
    <text evidence="1">In the central section; belongs to the AAA ATPase family.</text>
</comment>
<comment type="similarity">
    <text evidence="1">In the C-terminal section; belongs to the peptidase M41 family.</text>
</comment>
<organism>
    <name type="scientific">Marinobacter nauticus (strain ATCC 700491 / DSM 11845 / VT8)</name>
    <name type="common">Marinobacter aquaeolei</name>
    <dbReference type="NCBI Taxonomy" id="351348"/>
    <lineage>
        <taxon>Bacteria</taxon>
        <taxon>Pseudomonadati</taxon>
        <taxon>Pseudomonadota</taxon>
        <taxon>Gammaproteobacteria</taxon>
        <taxon>Pseudomonadales</taxon>
        <taxon>Marinobacteraceae</taxon>
        <taxon>Marinobacter</taxon>
    </lineage>
</organism>
<accession>A1TZE0</accession>
<evidence type="ECO:0000255" key="1">
    <source>
        <dbReference type="HAMAP-Rule" id="MF_01458"/>
    </source>
</evidence>
<sequence length="633" mass="70371">MTPSNEPGKQDQIPQPGPTIPNQYSFLWLSAAIFLMFLWLQGNNQQQQQELAYSEFKQAVISGQVAEVTLRTEEISGSFTDSGASRFANDSRPPSSSFITLRPQVEDPELLPLLERQEVLVRGSRSGRPWWQELILGFLPWILLLALMFWFWGAAQKRMTQGGGPFDYGKSRARRARRETSTTTLDDVAGIESAKRDISEIIDFLKSPDKYRRLGAVMPKGVLLVGPPGTGKTLLARAIAGEAEVPFFSISASEFIEMFVGVGAARVRDMFQTARKEAPALIFIDELDAVGRSRGAGLGGGHDEREQTLNQILTEMDGFEAHENVLVLAATNRPDVLDTALLRPGRFDRKITLDRPHREAREAILKVHVRKVPLAADVDLTQVAARTTGFSGADLKNLVNEAALTAARDNLVEVNNHCFEVAHDRLILGEERDAQLTPEEREAVAYHECGHAIMAYYMPKADPLTKITIIPHGMAMGVTEQTPKEDKYNYTESYLEDRIKVMLGGRSAEKIIYGEVSTGAQNDLKEATKLLRRMVGQWGMSEKIGPLGLGIGEEHVFLGREMGAPREYSEKLAEMIDSEIQSQLLAFEAFTVSFLTEHRQELDALARAVMKRETLSAGEITEVLEEARSRETA</sequence>
<keyword id="KW-0067">ATP-binding</keyword>
<keyword id="KW-0997">Cell inner membrane</keyword>
<keyword id="KW-1003">Cell membrane</keyword>
<keyword id="KW-0378">Hydrolase</keyword>
<keyword id="KW-0472">Membrane</keyword>
<keyword id="KW-0479">Metal-binding</keyword>
<keyword id="KW-0482">Metalloprotease</keyword>
<keyword id="KW-0547">Nucleotide-binding</keyword>
<keyword id="KW-0645">Protease</keyword>
<keyword id="KW-0812">Transmembrane</keyword>
<keyword id="KW-1133">Transmembrane helix</keyword>
<keyword id="KW-0862">Zinc</keyword>
<dbReference type="EC" id="3.4.24.-" evidence="1"/>
<dbReference type="EMBL" id="CP000514">
    <property type="protein sequence ID" value="ABM18109.1"/>
    <property type="molecule type" value="Genomic_DNA"/>
</dbReference>
<dbReference type="RefSeq" id="WP_011784527.1">
    <property type="nucleotide sequence ID" value="NC_008740.1"/>
</dbReference>
<dbReference type="SMR" id="A1TZE0"/>
<dbReference type="STRING" id="351348.Maqu_1017"/>
<dbReference type="KEGG" id="maq:Maqu_1017"/>
<dbReference type="eggNOG" id="COG0465">
    <property type="taxonomic scope" value="Bacteria"/>
</dbReference>
<dbReference type="HOGENOM" id="CLU_000688_16_2_6"/>
<dbReference type="OrthoDB" id="9809379at2"/>
<dbReference type="Proteomes" id="UP000000998">
    <property type="component" value="Chromosome"/>
</dbReference>
<dbReference type="GO" id="GO:0005886">
    <property type="term" value="C:plasma membrane"/>
    <property type="evidence" value="ECO:0007669"/>
    <property type="project" value="UniProtKB-SubCell"/>
</dbReference>
<dbReference type="GO" id="GO:0005524">
    <property type="term" value="F:ATP binding"/>
    <property type="evidence" value="ECO:0007669"/>
    <property type="project" value="UniProtKB-UniRule"/>
</dbReference>
<dbReference type="GO" id="GO:0016887">
    <property type="term" value="F:ATP hydrolysis activity"/>
    <property type="evidence" value="ECO:0007669"/>
    <property type="project" value="UniProtKB-UniRule"/>
</dbReference>
<dbReference type="GO" id="GO:0004176">
    <property type="term" value="F:ATP-dependent peptidase activity"/>
    <property type="evidence" value="ECO:0007669"/>
    <property type="project" value="InterPro"/>
</dbReference>
<dbReference type="GO" id="GO:0004222">
    <property type="term" value="F:metalloendopeptidase activity"/>
    <property type="evidence" value="ECO:0007669"/>
    <property type="project" value="InterPro"/>
</dbReference>
<dbReference type="GO" id="GO:0008270">
    <property type="term" value="F:zinc ion binding"/>
    <property type="evidence" value="ECO:0007669"/>
    <property type="project" value="UniProtKB-UniRule"/>
</dbReference>
<dbReference type="GO" id="GO:0030163">
    <property type="term" value="P:protein catabolic process"/>
    <property type="evidence" value="ECO:0007669"/>
    <property type="project" value="UniProtKB-UniRule"/>
</dbReference>
<dbReference type="GO" id="GO:0006508">
    <property type="term" value="P:proteolysis"/>
    <property type="evidence" value="ECO:0007669"/>
    <property type="project" value="UniProtKB-KW"/>
</dbReference>
<dbReference type="CDD" id="cd19501">
    <property type="entry name" value="RecA-like_FtsH"/>
    <property type="match status" value="1"/>
</dbReference>
<dbReference type="FunFam" id="1.10.8.60:FF:000001">
    <property type="entry name" value="ATP-dependent zinc metalloprotease FtsH"/>
    <property type="match status" value="1"/>
</dbReference>
<dbReference type="FunFam" id="1.20.58.760:FF:000001">
    <property type="entry name" value="ATP-dependent zinc metalloprotease FtsH"/>
    <property type="match status" value="1"/>
</dbReference>
<dbReference type="FunFam" id="3.40.50.300:FF:000001">
    <property type="entry name" value="ATP-dependent zinc metalloprotease FtsH"/>
    <property type="match status" value="1"/>
</dbReference>
<dbReference type="Gene3D" id="1.10.8.60">
    <property type="match status" value="1"/>
</dbReference>
<dbReference type="Gene3D" id="3.30.720.210">
    <property type="match status" value="1"/>
</dbReference>
<dbReference type="Gene3D" id="3.40.50.300">
    <property type="entry name" value="P-loop containing nucleotide triphosphate hydrolases"/>
    <property type="match status" value="1"/>
</dbReference>
<dbReference type="Gene3D" id="1.20.58.760">
    <property type="entry name" value="Peptidase M41"/>
    <property type="match status" value="1"/>
</dbReference>
<dbReference type="HAMAP" id="MF_01458">
    <property type="entry name" value="FtsH"/>
    <property type="match status" value="1"/>
</dbReference>
<dbReference type="InterPro" id="IPR003593">
    <property type="entry name" value="AAA+_ATPase"/>
</dbReference>
<dbReference type="InterPro" id="IPR041569">
    <property type="entry name" value="AAA_lid_3"/>
</dbReference>
<dbReference type="InterPro" id="IPR003959">
    <property type="entry name" value="ATPase_AAA_core"/>
</dbReference>
<dbReference type="InterPro" id="IPR003960">
    <property type="entry name" value="ATPase_AAA_CS"/>
</dbReference>
<dbReference type="InterPro" id="IPR005936">
    <property type="entry name" value="FtsH"/>
</dbReference>
<dbReference type="InterPro" id="IPR027417">
    <property type="entry name" value="P-loop_NTPase"/>
</dbReference>
<dbReference type="InterPro" id="IPR011546">
    <property type="entry name" value="Pept_M41_FtsH_extracell"/>
</dbReference>
<dbReference type="InterPro" id="IPR000642">
    <property type="entry name" value="Peptidase_M41"/>
</dbReference>
<dbReference type="InterPro" id="IPR037219">
    <property type="entry name" value="Peptidase_M41-like"/>
</dbReference>
<dbReference type="NCBIfam" id="TIGR01241">
    <property type="entry name" value="FtsH_fam"/>
    <property type="match status" value="1"/>
</dbReference>
<dbReference type="PANTHER" id="PTHR23076:SF97">
    <property type="entry name" value="ATP-DEPENDENT ZINC METALLOPROTEASE YME1L1"/>
    <property type="match status" value="1"/>
</dbReference>
<dbReference type="PANTHER" id="PTHR23076">
    <property type="entry name" value="METALLOPROTEASE M41 FTSH"/>
    <property type="match status" value="1"/>
</dbReference>
<dbReference type="Pfam" id="PF00004">
    <property type="entry name" value="AAA"/>
    <property type="match status" value="1"/>
</dbReference>
<dbReference type="Pfam" id="PF17862">
    <property type="entry name" value="AAA_lid_3"/>
    <property type="match status" value="1"/>
</dbReference>
<dbReference type="Pfam" id="PF06480">
    <property type="entry name" value="FtsH_ext"/>
    <property type="match status" value="1"/>
</dbReference>
<dbReference type="Pfam" id="PF01434">
    <property type="entry name" value="Peptidase_M41"/>
    <property type="match status" value="1"/>
</dbReference>
<dbReference type="SMART" id="SM00382">
    <property type="entry name" value="AAA"/>
    <property type="match status" value="1"/>
</dbReference>
<dbReference type="SUPFAM" id="SSF140990">
    <property type="entry name" value="FtsH protease domain-like"/>
    <property type="match status" value="1"/>
</dbReference>
<dbReference type="SUPFAM" id="SSF52540">
    <property type="entry name" value="P-loop containing nucleoside triphosphate hydrolases"/>
    <property type="match status" value="1"/>
</dbReference>
<dbReference type="PROSITE" id="PS00674">
    <property type="entry name" value="AAA"/>
    <property type="match status" value="1"/>
</dbReference>
<reference key="1">
    <citation type="journal article" date="2011" name="Appl. Environ. Microbiol.">
        <title>Genomic potential of Marinobacter aquaeolei, a biogeochemical 'opportunitroph'.</title>
        <authorList>
            <person name="Singer E."/>
            <person name="Webb E.A."/>
            <person name="Nelson W.C."/>
            <person name="Heidelberg J.F."/>
            <person name="Ivanova N."/>
            <person name="Pati A."/>
            <person name="Edwards K.J."/>
        </authorList>
    </citation>
    <scope>NUCLEOTIDE SEQUENCE [LARGE SCALE GENOMIC DNA]</scope>
    <source>
        <strain>ATCC 700491 / DSM 11845 / VT8</strain>
    </source>
</reference>
<proteinExistence type="inferred from homology"/>
<feature type="chain" id="PRO_0000400351" description="ATP-dependent zinc metalloprotease FtsH">
    <location>
        <begin position="1"/>
        <end position="633"/>
    </location>
</feature>
<feature type="topological domain" description="Cytoplasmic" evidence="1">
    <location>
        <begin position="1"/>
        <end position="19"/>
    </location>
</feature>
<feature type="transmembrane region" description="Helical" evidence="1">
    <location>
        <begin position="20"/>
        <end position="40"/>
    </location>
</feature>
<feature type="topological domain" description="Periplasmic" evidence="1">
    <location>
        <begin position="41"/>
        <end position="133"/>
    </location>
</feature>
<feature type="transmembrane region" description="Helical" evidence="1">
    <location>
        <begin position="134"/>
        <end position="154"/>
    </location>
</feature>
<feature type="topological domain" description="Cytoplasmic" evidence="1">
    <location>
        <begin position="155"/>
        <end position="633"/>
    </location>
</feature>
<feature type="active site" evidence="1">
    <location>
        <position position="448"/>
    </location>
</feature>
<feature type="binding site" evidence="1">
    <location>
        <begin position="226"/>
        <end position="233"/>
    </location>
    <ligand>
        <name>ATP</name>
        <dbReference type="ChEBI" id="CHEBI:30616"/>
    </ligand>
</feature>
<feature type="binding site" evidence="1">
    <location>
        <position position="447"/>
    </location>
    <ligand>
        <name>Zn(2+)</name>
        <dbReference type="ChEBI" id="CHEBI:29105"/>
        <note>catalytic</note>
    </ligand>
</feature>
<feature type="binding site" evidence="1">
    <location>
        <position position="451"/>
    </location>
    <ligand>
        <name>Zn(2+)</name>
        <dbReference type="ChEBI" id="CHEBI:29105"/>
        <note>catalytic</note>
    </ligand>
</feature>
<feature type="binding site" evidence="1">
    <location>
        <position position="523"/>
    </location>
    <ligand>
        <name>Zn(2+)</name>
        <dbReference type="ChEBI" id="CHEBI:29105"/>
        <note>catalytic</note>
    </ligand>
</feature>
<protein>
    <recommendedName>
        <fullName evidence="1">ATP-dependent zinc metalloprotease FtsH</fullName>
        <ecNumber evidence="1">3.4.24.-</ecNumber>
    </recommendedName>
</protein>